<protein>
    <recommendedName>
        <fullName evidence="1">Protein SlyX homolog</fullName>
    </recommendedName>
</protein>
<reference key="1">
    <citation type="journal article" date="2000" name="Nature">
        <title>DNA sequence of both chromosomes of the cholera pathogen Vibrio cholerae.</title>
        <authorList>
            <person name="Heidelberg J.F."/>
            <person name="Eisen J.A."/>
            <person name="Nelson W.C."/>
            <person name="Clayton R.A."/>
            <person name="Gwinn M.L."/>
            <person name="Dodson R.J."/>
            <person name="Haft D.H."/>
            <person name="Hickey E.K."/>
            <person name="Peterson J.D."/>
            <person name="Umayam L.A."/>
            <person name="Gill S.R."/>
            <person name="Nelson K.E."/>
            <person name="Read T.D."/>
            <person name="Tettelin H."/>
            <person name="Richardson D.L."/>
            <person name="Ermolaeva M.D."/>
            <person name="Vamathevan J.J."/>
            <person name="Bass S."/>
            <person name="Qin H."/>
            <person name="Dragoi I."/>
            <person name="Sellers P."/>
            <person name="McDonald L.A."/>
            <person name="Utterback T.R."/>
            <person name="Fleischmann R.D."/>
            <person name="Nierman W.C."/>
            <person name="White O."/>
            <person name="Salzberg S.L."/>
            <person name="Smith H.O."/>
            <person name="Colwell R.R."/>
            <person name="Mekalanos J.J."/>
            <person name="Venter J.C."/>
            <person name="Fraser C.M."/>
        </authorList>
    </citation>
    <scope>NUCLEOTIDE SEQUENCE [LARGE SCALE GENOMIC DNA]</scope>
    <source>
        <strain>ATCC 39315 / El Tor Inaba N16961</strain>
    </source>
</reference>
<organism>
    <name type="scientific">Vibrio cholerae serotype O1 (strain ATCC 39315 / El Tor Inaba N16961)</name>
    <dbReference type="NCBI Taxonomy" id="243277"/>
    <lineage>
        <taxon>Bacteria</taxon>
        <taxon>Pseudomonadati</taxon>
        <taxon>Pseudomonadota</taxon>
        <taxon>Gammaproteobacteria</taxon>
        <taxon>Vibrionales</taxon>
        <taxon>Vibrionaceae</taxon>
        <taxon>Vibrio</taxon>
    </lineage>
</organism>
<accession>Q9KV06</accession>
<sequence length="72" mass="8276">MSLTQLQERIEDLECKLAFQEQTIETLNDALTQQQLLLSKMQDQMKYVVGKVKNMDTSTLADPAHETPPPHY</sequence>
<name>SLYX_VIBCH</name>
<feature type="chain" id="PRO_0000209216" description="Protein SlyX homolog">
    <location>
        <begin position="1"/>
        <end position="72"/>
    </location>
</feature>
<dbReference type="EMBL" id="AE003852">
    <property type="protein sequence ID" value="AAF93525.1"/>
    <property type="molecule type" value="Genomic_DNA"/>
</dbReference>
<dbReference type="PIR" id="H82334">
    <property type="entry name" value="H82334"/>
</dbReference>
<dbReference type="RefSeq" id="WP_001890311.1">
    <property type="nucleotide sequence ID" value="NZ_LT906614.1"/>
</dbReference>
<dbReference type="SMR" id="Q9KV06"/>
<dbReference type="STRING" id="243277.VC_0352"/>
<dbReference type="DNASU" id="2615065"/>
<dbReference type="EnsemblBacteria" id="AAF93525">
    <property type="protein sequence ID" value="AAF93525"/>
    <property type="gene ID" value="VC_0352"/>
</dbReference>
<dbReference type="KEGG" id="vch:VC_0352"/>
<dbReference type="eggNOG" id="COG2900">
    <property type="taxonomic scope" value="Bacteria"/>
</dbReference>
<dbReference type="HOGENOM" id="CLU_180796_4_0_6"/>
<dbReference type="Proteomes" id="UP000000584">
    <property type="component" value="Chromosome 1"/>
</dbReference>
<dbReference type="Gene3D" id="1.20.5.300">
    <property type="match status" value="1"/>
</dbReference>
<dbReference type="HAMAP" id="MF_00715">
    <property type="entry name" value="SlyX"/>
    <property type="match status" value="1"/>
</dbReference>
<dbReference type="InterPro" id="IPR007236">
    <property type="entry name" value="SlyX"/>
</dbReference>
<dbReference type="NCBIfam" id="NF003357">
    <property type="entry name" value="PRK04406.1"/>
    <property type="match status" value="1"/>
</dbReference>
<dbReference type="PANTHER" id="PTHR36508">
    <property type="entry name" value="PROTEIN SLYX"/>
    <property type="match status" value="1"/>
</dbReference>
<dbReference type="PANTHER" id="PTHR36508:SF1">
    <property type="entry name" value="PROTEIN SLYX"/>
    <property type="match status" value="1"/>
</dbReference>
<dbReference type="Pfam" id="PF04102">
    <property type="entry name" value="SlyX"/>
    <property type="match status" value="1"/>
</dbReference>
<comment type="similarity">
    <text evidence="1">Belongs to the SlyX family.</text>
</comment>
<keyword id="KW-1185">Reference proteome</keyword>
<gene>
    <name evidence="1" type="primary">slyX</name>
    <name type="ordered locus">VC_0352</name>
</gene>
<proteinExistence type="inferred from homology"/>
<evidence type="ECO:0000255" key="1">
    <source>
        <dbReference type="HAMAP-Rule" id="MF_00715"/>
    </source>
</evidence>